<organism>
    <name type="scientific">Acinetobacter baumannii (strain ACICU)</name>
    <dbReference type="NCBI Taxonomy" id="405416"/>
    <lineage>
        <taxon>Bacteria</taxon>
        <taxon>Pseudomonadati</taxon>
        <taxon>Pseudomonadota</taxon>
        <taxon>Gammaproteobacteria</taxon>
        <taxon>Moraxellales</taxon>
        <taxon>Moraxellaceae</taxon>
        <taxon>Acinetobacter</taxon>
        <taxon>Acinetobacter calcoaceticus/baumannii complex</taxon>
    </lineage>
</organism>
<accession>B2I2C4</accession>
<proteinExistence type="inferred from homology"/>
<comment type="function">
    <text evidence="1">Catalyzes the conversion of urocanate to 4-imidazolone-5-propionate.</text>
</comment>
<comment type="catalytic activity">
    <reaction evidence="1">
        <text>4-imidazolone-5-propanoate = trans-urocanate + H2O</text>
        <dbReference type="Rhea" id="RHEA:13101"/>
        <dbReference type="ChEBI" id="CHEBI:15377"/>
        <dbReference type="ChEBI" id="CHEBI:17771"/>
        <dbReference type="ChEBI" id="CHEBI:77893"/>
        <dbReference type="EC" id="4.2.1.49"/>
    </reaction>
</comment>
<comment type="cofactor">
    <cofactor evidence="1">
        <name>NAD(+)</name>
        <dbReference type="ChEBI" id="CHEBI:57540"/>
    </cofactor>
    <text evidence="1">Binds 1 NAD(+) per subunit.</text>
</comment>
<comment type="pathway">
    <text evidence="1">Amino-acid degradation; L-histidine degradation into L-glutamate; N-formimidoyl-L-glutamate from L-histidine: step 2/3.</text>
</comment>
<comment type="subcellular location">
    <subcellularLocation>
        <location evidence="1">Cytoplasm</location>
    </subcellularLocation>
</comment>
<comment type="similarity">
    <text evidence="1">Belongs to the urocanase family.</text>
</comment>
<keyword id="KW-0963">Cytoplasm</keyword>
<keyword id="KW-0369">Histidine metabolism</keyword>
<keyword id="KW-0456">Lyase</keyword>
<keyword id="KW-0520">NAD</keyword>
<reference key="1">
    <citation type="journal article" date="2008" name="Antimicrob. Agents Chemother.">
        <title>Whole-genome pyrosequencing of an epidemic multidrug-resistant Acinetobacter baumannii strain belonging to the European clone II group.</title>
        <authorList>
            <person name="Iacono M."/>
            <person name="Villa L."/>
            <person name="Fortini D."/>
            <person name="Bordoni R."/>
            <person name="Imperi F."/>
            <person name="Bonnal R.J."/>
            <person name="Sicheritz-Ponten T."/>
            <person name="De Bellis G."/>
            <person name="Visca P."/>
            <person name="Cassone A."/>
            <person name="Carattoli A."/>
        </authorList>
    </citation>
    <scope>NUCLEOTIDE SEQUENCE [LARGE SCALE GENOMIC DNA]</scope>
    <source>
        <strain>ACICU</strain>
    </source>
</reference>
<feature type="chain" id="PRO_1000129553" description="Urocanate hydratase">
    <location>
        <begin position="1"/>
        <end position="558"/>
    </location>
</feature>
<feature type="active site" evidence="1">
    <location>
        <position position="412"/>
    </location>
</feature>
<feature type="binding site" evidence="1">
    <location>
        <begin position="54"/>
        <end position="55"/>
    </location>
    <ligand>
        <name>NAD(+)</name>
        <dbReference type="ChEBI" id="CHEBI:57540"/>
    </ligand>
</feature>
<feature type="binding site" evidence="1">
    <location>
        <position position="132"/>
    </location>
    <ligand>
        <name>NAD(+)</name>
        <dbReference type="ChEBI" id="CHEBI:57540"/>
    </ligand>
</feature>
<feature type="binding site" evidence="1">
    <location>
        <begin position="178"/>
        <end position="180"/>
    </location>
    <ligand>
        <name>NAD(+)</name>
        <dbReference type="ChEBI" id="CHEBI:57540"/>
    </ligand>
</feature>
<feature type="binding site" evidence="1">
    <location>
        <position position="198"/>
    </location>
    <ligand>
        <name>NAD(+)</name>
        <dbReference type="ChEBI" id="CHEBI:57540"/>
    </ligand>
</feature>
<feature type="binding site" evidence="1">
    <location>
        <begin position="244"/>
        <end position="245"/>
    </location>
    <ligand>
        <name>NAD(+)</name>
        <dbReference type="ChEBI" id="CHEBI:57540"/>
    </ligand>
</feature>
<feature type="binding site" evidence="1">
    <location>
        <begin position="265"/>
        <end position="269"/>
    </location>
    <ligand>
        <name>NAD(+)</name>
        <dbReference type="ChEBI" id="CHEBI:57540"/>
    </ligand>
</feature>
<feature type="binding site" evidence="1">
    <location>
        <begin position="275"/>
        <end position="276"/>
    </location>
    <ligand>
        <name>NAD(+)</name>
        <dbReference type="ChEBI" id="CHEBI:57540"/>
    </ligand>
</feature>
<feature type="binding site" evidence="1">
    <location>
        <position position="324"/>
    </location>
    <ligand>
        <name>NAD(+)</name>
        <dbReference type="ChEBI" id="CHEBI:57540"/>
    </ligand>
</feature>
<feature type="binding site" evidence="1">
    <location>
        <position position="494"/>
    </location>
    <ligand>
        <name>NAD(+)</name>
        <dbReference type="ChEBI" id="CHEBI:57540"/>
    </ligand>
</feature>
<dbReference type="EC" id="4.2.1.49" evidence="1"/>
<dbReference type="EMBL" id="CP000863">
    <property type="protein sequence ID" value="ACC58911.1"/>
    <property type="molecule type" value="Genomic_DNA"/>
</dbReference>
<dbReference type="RefSeq" id="WP_000214184.1">
    <property type="nucleotide sequence ID" value="NZ_CP031380.1"/>
</dbReference>
<dbReference type="SMR" id="B2I2C4"/>
<dbReference type="KEGG" id="abc:ACICU_03602"/>
<dbReference type="HOGENOM" id="CLU_018868_0_1_6"/>
<dbReference type="UniPathway" id="UPA00379">
    <property type="reaction ID" value="UER00550"/>
</dbReference>
<dbReference type="Proteomes" id="UP000008839">
    <property type="component" value="Chromosome"/>
</dbReference>
<dbReference type="GO" id="GO:0005737">
    <property type="term" value="C:cytoplasm"/>
    <property type="evidence" value="ECO:0007669"/>
    <property type="project" value="UniProtKB-SubCell"/>
</dbReference>
<dbReference type="GO" id="GO:0016153">
    <property type="term" value="F:urocanate hydratase activity"/>
    <property type="evidence" value="ECO:0007669"/>
    <property type="project" value="UniProtKB-UniRule"/>
</dbReference>
<dbReference type="GO" id="GO:0019556">
    <property type="term" value="P:L-histidine catabolic process to glutamate and formamide"/>
    <property type="evidence" value="ECO:0007669"/>
    <property type="project" value="UniProtKB-UniPathway"/>
</dbReference>
<dbReference type="GO" id="GO:0019557">
    <property type="term" value="P:L-histidine catabolic process to glutamate and formate"/>
    <property type="evidence" value="ECO:0007669"/>
    <property type="project" value="UniProtKB-UniPathway"/>
</dbReference>
<dbReference type="FunFam" id="3.40.50.10730:FF:000001">
    <property type="entry name" value="Urocanate hydratase"/>
    <property type="match status" value="1"/>
</dbReference>
<dbReference type="Gene3D" id="3.40.50.10730">
    <property type="entry name" value="Urocanase like domains"/>
    <property type="match status" value="1"/>
</dbReference>
<dbReference type="Gene3D" id="3.40.1770.10">
    <property type="entry name" value="Urocanase superfamily"/>
    <property type="match status" value="1"/>
</dbReference>
<dbReference type="HAMAP" id="MF_00577">
    <property type="entry name" value="HutU"/>
    <property type="match status" value="1"/>
</dbReference>
<dbReference type="InterPro" id="IPR055351">
    <property type="entry name" value="Urocanase"/>
</dbReference>
<dbReference type="InterPro" id="IPR023637">
    <property type="entry name" value="Urocanase-like"/>
</dbReference>
<dbReference type="InterPro" id="IPR035401">
    <property type="entry name" value="Urocanase_C"/>
</dbReference>
<dbReference type="InterPro" id="IPR038364">
    <property type="entry name" value="Urocanase_central_sf"/>
</dbReference>
<dbReference type="InterPro" id="IPR023636">
    <property type="entry name" value="Urocanase_CS"/>
</dbReference>
<dbReference type="InterPro" id="IPR035400">
    <property type="entry name" value="Urocanase_N"/>
</dbReference>
<dbReference type="InterPro" id="IPR035085">
    <property type="entry name" value="Urocanase_Rossmann-like"/>
</dbReference>
<dbReference type="InterPro" id="IPR036190">
    <property type="entry name" value="Urocanase_sf"/>
</dbReference>
<dbReference type="NCBIfam" id="TIGR01228">
    <property type="entry name" value="hutU"/>
    <property type="match status" value="1"/>
</dbReference>
<dbReference type="NCBIfam" id="NF003820">
    <property type="entry name" value="PRK05414.1"/>
    <property type="match status" value="1"/>
</dbReference>
<dbReference type="PANTHER" id="PTHR12216">
    <property type="entry name" value="UROCANATE HYDRATASE"/>
    <property type="match status" value="1"/>
</dbReference>
<dbReference type="PANTHER" id="PTHR12216:SF4">
    <property type="entry name" value="UROCANATE HYDRATASE"/>
    <property type="match status" value="1"/>
</dbReference>
<dbReference type="Pfam" id="PF01175">
    <property type="entry name" value="Urocanase"/>
    <property type="match status" value="1"/>
</dbReference>
<dbReference type="Pfam" id="PF17392">
    <property type="entry name" value="Urocanase_C"/>
    <property type="match status" value="1"/>
</dbReference>
<dbReference type="Pfam" id="PF17391">
    <property type="entry name" value="Urocanase_N"/>
    <property type="match status" value="1"/>
</dbReference>
<dbReference type="PIRSF" id="PIRSF001423">
    <property type="entry name" value="Urocanate_hydrat"/>
    <property type="match status" value="1"/>
</dbReference>
<dbReference type="SUPFAM" id="SSF111326">
    <property type="entry name" value="Urocanase"/>
    <property type="match status" value="1"/>
</dbReference>
<dbReference type="PROSITE" id="PS01233">
    <property type="entry name" value="UROCANASE"/>
    <property type="match status" value="1"/>
</dbReference>
<sequence>MTTTTTKFRDVEIRAPRGTELTAKSWLTEAPLRMLMNNLDPDVAENPKELVVYGGIGRAARNWECFDKIVDTLKNLETDETLLVQSGKPVGVFKTHKDAPRVLIANSNLVPHWANWEHFNELDAKALAMYGQMTAGSWIYIGSQGIVQGTYETFVEAGRQHYNGDLKGRWVLTAGLGGMGGAQPLAATLAGACSLNIECQQASIDFRLRTRYVDEQATDLDDALARIDRYTKEGKAISIALHGNAAEILPELVRRGVRPDMVTDQTSAHDPLNGYLPVGWTWEEYRERAKTEPEAVVKAAKQSMAKHVQAMLDFQKMGVPTFDYGNNIRQMAKEEGVANAFDFPGFVPAYIRPLFCRGIGPFRWAALSGDPEDIYKTDAKVKELIPDDEHLHHWLDMARERISFQGLPARICWVGLGLRAKLGLAFNEMVRSGELSAPIVIGRDHLDSGSVASPNRETEAMQDGSDAVSDWPLLNALLNTAGGATWVSLHHGGGVGMGFSQHSGVVIVCDGTDEAAARIARVLTNDPATGVMRHADAGYEIAINCAKEQGLHLPMITQ</sequence>
<name>HUTU_ACIBC</name>
<protein>
    <recommendedName>
        <fullName evidence="1">Urocanate hydratase</fullName>
        <shortName evidence="1">Urocanase</shortName>
        <ecNumber evidence="1">4.2.1.49</ecNumber>
    </recommendedName>
    <alternativeName>
        <fullName evidence="1">Imidazolonepropionate hydrolase</fullName>
    </alternativeName>
</protein>
<gene>
    <name evidence="1" type="primary">hutU</name>
    <name type="ordered locus">ACICU_03602</name>
</gene>
<evidence type="ECO:0000255" key="1">
    <source>
        <dbReference type="HAMAP-Rule" id="MF_00577"/>
    </source>
</evidence>